<gene>
    <name evidence="1" type="primary">vapB50</name>
    <name type="ordered locus">Rv3750c</name>
    <name type="ordered locus">RVBD_3750c</name>
    <name type="ORF">P425_03902</name>
</gene>
<dbReference type="EMBL" id="AL123456">
    <property type="protein sequence ID" value="CCP46577.1"/>
    <property type="molecule type" value="Genomic_DNA"/>
</dbReference>
<dbReference type="EMBL" id="CP003248">
    <property type="protein sequence ID" value="AFN51774.1"/>
    <property type="molecule type" value="Genomic_DNA"/>
</dbReference>
<dbReference type="EMBL" id="JLDD01000048">
    <property type="protein sequence ID" value="KBJ24825.1"/>
    <property type="molecule type" value="Genomic_DNA"/>
</dbReference>
<dbReference type="RefSeq" id="NP_218267.1">
    <property type="nucleotide sequence ID" value="NC_000962.3"/>
</dbReference>
<dbReference type="RefSeq" id="WP_003420504.1">
    <property type="nucleotide sequence ID" value="NZ_NVQJ01000009.1"/>
</dbReference>
<dbReference type="STRING" id="83332.Rv3750c"/>
<dbReference type="PaxDb" id="83332-Rv3750c"/>
<dbReference type="DNASU" id="885807"/>
<dbReference type="GeneID" id="885807"/>
<dbReference type="KEGG" id="mtu:Rv3750c"/>
<dbReference type="KEGG" id="mtv:RVBD_3750c"/>
<dbReference type="PATRIC" id="fig|83332.111.peg.4171"/>
<dbReference type="TubercuList" id="Rv3750c"/>
<dbReference type="eggNOG" id="COG3311">
    <property type="taxonomic scope" value="Bacteria"/>
</dbReference>
<dbReference type="HOGENOM" id="CLU_106726_2_0_11"/>
<dbReference type="InParanoid" id="O69717"/>
<dbReference type="OrthoDB" id="26212at2"/>
<dbReference type="PhylomeDB" id="O69717"/>
<dbReference type="Proteomes" id="UP000001584">
    <property type="component" value="Chromosome"/>
</dbReference>
<dbReference type="GO" id="GO:0003677">
    <property type="term" value="F:DNA binding"/>
    <property type="evidence" value="ECO:0007669"/>
    <property type="project" value="InterPro"/>
</dbReference>
<dbReference type="InterPro" id="IPR009061">
    <property type="entry name" value="DNA-bd_dom_put_sf"/>
</dbReference>
<dbReference type="InterPro" id="IPR041657">
    <property type="entry name" value="HTH_17"/>
</dbReference>
<dbReference type="InterPro" id="IPR010093">
    <property type="entry name" value="SinI_DNA-bd"/>
</dbReference>
<dbReference type="NCBIfam" id="TIGR01764">
    <property type="entry name" value="excise"/>
    <property type="match status" value="1"/>
</dbReference>
<dbReference type="Pfam" id="PF12728">
    <property type="entry name" value="HTH_17"/>
    <property type="match status" value="1"/>
</dbReference>
<dbReference type="SUPFAM" id="SSF46955">
    <property type="entry name" value="Putative DNA-binding domain"/>
    <property type="match status" value="1"/>
</dbReference>
<comment type="function">
    <text evidence="2">Possibly the antitoxin component of a type II toxin-antitoxin (TA) system. Its cognate toxin is VapC50.</text>
</comment>
<reference key="1">
    <citation type="journal article" date="1998" name="Nature">
        <title>Deciphering the biology of Mycobacterium tuberculosis from the complete genome sequence.</title>
        <authorList>
            <person name="Cole S.T."/>
            <person name="Brosch R."/>
            <person name="Parkhill J."/>
            <person name="Garnier T."/>
            <person name="Churcher C.M."/>
            <person name="Harris D.E."/>
            <person name="Gordon S.V."/>
            <person name="Eiglmeier K."/>
            <person name="Gas S."/>
            <person name="Barry C.E. III"/>
            <person name="Tekaia F."/>
            <person name="Badcock K."/>
            <person name="Basham D."/>
            <person name="Brown D."/>
            <person name="Chillingworth T."/>
            <person name="Connor R."/>
            <person name="Davies R.M."/>
            <person name="Devlin K."/>
            <person name="Feltwell T."/>
            <person name="Gentles S."/>
            <person name="Hamlin N."/>
            <person name="Holroyd S."/>
            <person name="Hornsby T."/>
            <person name="Jagels K."/>
            <person name="Krogh A."/>
            <person name="McLean J."/>
            <person name="Moule S."/>
            <person name="Murphy L.D."/>
            <person name="Oliver S."/>
            <person name="Osborne J."/>
            <person name="Quail M.A."/>
            <person name="Rajandream M.A."/>
            <person name="Rogers J."/>
            <person name="Rutter S."/>
            <person name="Seeger K."/>
            <person name="Skelton S."/>
            <person name="Squares S."/>
            <person name="Squares R."/>
            <person name="Sulston J.E."/>
            <person name="Taylor K."/>
            <person name="Whitehead S."/>
            <person name="Barrell B.G."/>
        </authorList>
    </citation>
    <scope>NUCLEOTIDE SEQUENCE [LARGE SCALE GENOMIC DNA]</scope>
    <source>
        <strain>ATCC 25618 / H37Rv</strain>
    </source>
</reference>
<reference key="2">
    <citation type="submission" date="2013-11" db="EMBL/GenBank/DDBJ databases">
        <title>The genome sequence of Mycobacterium tuberculosis H37Rv.</title>
        <authorList>
            <consortium name="The Broad Institute Genome Sequencing Platform"/>
            <person name="Galagan J."/>
            <person name="Kreiswirth B."/>
            <person name="Dobos K."/>
            <person name="Fortune S."/>
            <person name="Fitzgerald M."/>
            <person name="Young S.K."/>
            <person name="Zeng Q."/>
            <person name="Gargeya S."/>
            <person name="Abouelleil A."/>
            <person name="Alvarado L."/>
            <person name="Berlin A.M."/>
            <person name="Chapman S.B."/>
            <person name="Gainer-Dewar J."/>
            <person name="Goldberg J."/>
            <person name="Gnerre S."/>
            <person name="Griggs A."/>
            <person name="Gujja S."/>
            <person name="Hansen M."/>
            <person name="Howarth C."/>
            <person name="Imamovic A."/>
            <person name="Larimer J."/>
            <person name="McCowan C."/>
            <person name="Murphy C."/>
            <person name="Pearson M."/>
            <person name="Poon T."/>
            <person name="Priest M."/>
            <person name="Roberts A."/>
            <person name="Saif S."/>
            <person name="Shea T."/>
            <person name="Sykes S."/>
            <person name="Wortman J."/>
            <person name="Nusbaum C."/>
            <person name="Birren B."/>
        </authorList>
    </citation>
    <scope>NUCLEOTIDE SEQUENCE [LARGE SCALE GENOMIC DNA]</scope>
    <source>
        <strain>ATCC 25618 / H37Rv</strain>
    </source>
</reference>
<reference key="3">
    <citation type="submission" date="2014-04" db="EMBL/GenBank/DDBJ databases">
        <title>The genome sequence of Mycobacterium tuberculosis H37Rv.</title>
        <authorList>
            <consortium name="The Broad Institute Genomics Platform"/>
            <consortium name="The Broad Institute Genome Sequencing Center for Infectious Disease"/>
            <person name="Earl A.M."/>
            <person name="Kreiswirth B."/>
            <person name="Gomez J."/>
            <person name="Victor T."/>
            <person name="Desjardins C."/>
            <person name="Abeel T."/>
            <person name="Young S."/>
            <person name="Zeng Q."/>
            <person name="Gargeya S."/>
            <person name="Abouelleil A."/>
            <person name="Alvarado L."/>
            <person name="Chapman S.B."/>
            <person name="Gainer-Dewar J."/>
            <person name="Goldberg J."/>
            <person name="Griggs A."/>
            <person name="Gujja S."/>
            <person name="Hansen M."/>
            <person name="Howarth C."/>
            <person name="Imamovic A."/>
            <person name="Larimer J."/>
            <person name="Murphy C."/>
            <person name="Naylor J."/>
            <person name="Pearson M."/>
            <person name="Poon T.W."/>
            <person name="Priest M."/>
            <person name="Roberts A."/>
            <person name="Saif S."/>
            <person name="Shea T."/>
            <person name="Sykes S."/>
            <person name="Wortman J."/>
            <person name="Nusbaum C."/>
            <person name="Birren B."/>
        </authorList>
    </citation>
    <scope>NUCLEOTIDE SEQUENCE [LARGE SCALE GENOMIC DNA]</scope>
    <source>
        <strain>ATCC 25618 / H37Rv</strain>
    </source>
</reference>
<reference key="4">
    <citation type="journal article" date="2014" name="Toxins">
        <title>Multiple toxin-antitoxin systems in Mycobacterium tuberculosis.</title>
        <authorList>
            <person name="Sala A."/>
            <person name="Bordes P."/>
            <person name="Genevaux P."/>
        </authorList>
    </citation>
    <scope>GENE NAME</scope>
    <scope>DISCUSSION OF FUNCTION</scope>
    <scope>REVIEW</scope>
    <source>
        <strain>ATCC 25618 / H37Rv</strain>
    </source>
</reference>
<feature type="chain" id="PRO_0000433059" description="Putative antitoxin VapB50">
    <location>
        <begin position="1"/>
        <end position="130"/>
    </location>
</feature>
<accession>O69717</accession>
<accession>F2GHF1</accession>
<accession>I6XI41</accession>
<accession>Q7D4X9</accession>
<proteinExistence type="predicted"/>
<name>VPB50_MYCTU</name>
<keyword id="KW-1185">Reference proteome</keyword>
<keyword id="KW-1277">Toxin-antitoxin system</keyword>
<organism>
    <name type="scientific">Mycobacterium tuberculosis (strain ATCC 25618 / H37Rv)</name>
    <dbReference type="NCBI Taxonomy" id="83332"/>
    <lineage>
        <taxon>Bacteria</taxon>
        <taxon>Bacillati</taxon>
        <taxon>Actinomycetota</taxon>
        <taxon>Actinomycetes</taxon>
        <taxon>Mycobacteriales</taxon>
        <taxon>Mycobacteriaceae</taxon>
        <taxon>Mycobacterium</taxon>
        <taxon>Mycobacterium tuberculosis complex</taxon>
    </lineage>
</organism>
<sequence>MTSLLEVLGAPEVSVCGNAGQPMTLPEPVRDALYNVVLALSQGKGISLVPRHLKLTTQEAADLLNISRPTLVRLLEDGRIPFEKPGRHRRVSLDALLEYQQETRSNRRAALGELSRDALGELQAALAEKK</sequence>
<evidence type="ECO:0000303" key="1">
    <source>
    </source>
</evidence>
<evidence type="ECO:0000305" key="2">
    <source>
    </source>
</evidence>
<protein>
    <recommendedName>
        <fullName evidence="1">Putative antitoxin VapB50</fullName>
    </recommendedName>
</protein>